<feature type="signal peptide" evidence="12">
    <location>
        <begin position="1"/>
        <end position="22"/>
    </location>
</feature>
<feature type="chain" id="PRO_0000010930" description="Interleukin-12 subunit beta">
    <location>
        <begin position="23"/>
        <end position="328"/>
    </location>
</feature>
<feature type="domain" description="Ig-like C2-type">
    <location>
        <begin position="23"/>
        <end position="106"/>
    </location>
</feature>
<feature type="domain" description="Fibronectin type-III" evidence="4">
    <location>
        <begin position="237"/>
        <end position="328"/>
    </location>
</feature>
<feature type="glycosylation site" description="N-linked (GlcNAc...) asparagine" evidence="2">
    <location>
        <position position="135"/>
    </location>
</feature>
<feature type="glycosylation site" description="N-linked (GlcNAc...) asparagine" evidence="6">
    <location>
        <position position="222"/>
    </location>
</feature>
<feature type="glycosylation site" id="CAR_000187" description="C-linked (Man) tryptophan" evidence="5">
    <location>
        <position position="319"/>
    </location>
</feature>
<feature type="disulfide bond" evidence="3 6">
    <location>
        <begin position="50"/>
        <end position="90"/>
    </location>
</feature>
<feature type="disulfide bond" evidence="3 6">
    <location>
        <begin position="131"/>
        <end position="142"/>
    </location>
</feature>
<feature type="disulfide bond" evidence="3 6">
    <location>
        <begin position="170"/>
        <end position="193"/>
    </location>
</feature>
<feature type="disulfide bond" description="Interchain (with C-96 in IL12A and C-73 in IL23A)" evidence="3 6 11">
    <location>
        <position position="199"/>
    </location>
</feature>
<feature type="disulfide bond" evidence="3 6">
    <location>
        <begin position="300"/>
        <end position="327"/>
    </location>
</feature>
<feature type="sequence variant" id="VAR_020001" description="In dbSNP:rs3213096." evidence="15">
    <original>V</original>
    <variation>I</variation>
    <location>
        <position position="33"/>
    </location>
</feature>
<feature type="sequence variant" id="VAR_049170" description="In dbSNP:rs3213119." evidence="15">
    <original>V</original>
    <variation>F</variation>
    <location>
        <position position="298"/>
    </location>
</feature>
<feature type="sequence conflict" description="In Ref. 2; AAA59938." evidence="16" ref="2">
    <original>K</original>
    <variation>N</variation>
    <location>
        <position position="239"/>
    </location>
</feature>
<feature type="strand" evidence="20">
    <location>
        <begin position="24"/>
        <end position="27"/>
    </location>
</feature>
<feature type="strand" evidence="20">
    <location>
        <begin position="30"/>
        <end position="36"/>
    </location>
</feature>
<feature type="strand" evidence="20">
    <location>
        <begin position="44"/>
        <end position="49"/>
    </location>
</feature>
<feature type="strand" evidence="17">
    <location>
        <begin position="51"/>
        <end position="53"/>
    </location>
</feature>
<feature type="strand" evidence="20">
    <location>
        <begin position="59"/>
        <end position="62"/>
    </location>
</feature>
<feature type="strand" evidence="20">
    <location>
        <begin position="70"/>
        <end position="79"/>
    </location>
</feature>
<feature type="helix" evidence="20">
    <location>
        <begin position="82"/>
        <end position="84"/>
    </location>
</feature>
<feature type="strand" evidence="20">
    <location>
        <begin position="86"/>
        <end position="92"/>
    </location>
</feature>
<feature type="strand" evidence="20">
    <location>
        <begin position="95"/>
        <end position="108"/>
    </location>
</feature>
<feature type="strand" evidence="18">
    <location>
        <begin position="116"/>
        <end position="118"/>
    </location>
</feature>
<feature type="strand" evidence="20">
    <location>
        <begin position="122"/>
        <end position="126"/>
    </location>
</feature>
<feature type="strand" evidence="20">
    <location>
        <begin position="130"/>
        <end position="147"/>
    </location>
</feature>
<feature type="strand" evidence="20">
    <location>
        <begin position="150"/>
        <end position="160"/>
    </location>
</feature>
<feature type="strand" evidence="20">
    <location>
        <begin position="162"/>
        <end position="164"/>
    </location>
</feature>
<feature type="strand" evidence="20">
    <location>
        <begin position="166"/>
        <end position="170"/>
    </location>
</feature>
<feature type="strand" evidence="20">
    <location>
        <begin position="174"/>
        <end position="181"/>
    </location>
</feature>
<feature type="strand" evidence="20">
    <location>
        <begin position="184"/>
        <end position="197"/>
    </location>
</feature>
<feature type="strand" evidence="18">
    <location>
        <begin position="200"/>
        <end position="202"/>
    </location>
</feature>
<feature type="strand" evidence="20">
    <location>
        <begin position="208"/>
        <end position="216"/>
    </location>
</feature>
<feature type="strand" evidence="20">
    <location>
        <begin position="219"/>
        <end position="227"/>
    </location>
</feature>
<feature type="helix" evidence="20">
    <location>
        <begin position="229"/>
        <end position="232"/>
    </location>
</feature>
<feature type="strand" evidence="20">
    <location>
        <begin position="239"/>
        <end position="245"/>
    </location>
</feature>
<feature type="strand" evidence="20">
    <location>
        <begin position="249"/>
        <end position="257"/>
    </location>
</feature>
<feature type="strand" evidence="19">
    <location>
        <begin position="260"/>
        <end position="262"/>
    </location>
</feature>
<feature type="turn" evidence="20">
    <location>
        <begin position="266"/>
        <end position="268"/>
    </location>
</feature>
<feature type="strand" evidence="20">
    <location>
        <begin position="271"/>
        <end position="278"/>
    </location>
</feature>
<feature type="strand" evidence="20">
    <location>
        <begin position="287"/>
        <end position="299"/>
    </location>
</feature>
<feature type="strand" evidence="21">
    <location>
        <begin position="302"/>
        <end position="304"/>
    </location>
</feature>
<feature type="strand" evidence="20">
    <location>
        <begin position="305"/>
        <end position="315"/>
    </location>
</feature>
<feature type="strand" evidence="20">
    <location>
        <begin position="323"/>
        <end position="326"/>
    </location>
</feature>
<gene>
    <name type="primary">IL12B</name>
    <name type="synonym">NKSF2</name>
</gene>
<dbReference type="EMBL" id="M65272">
    <property type="protein sequence ID" value="AAA35695.1"/>
    <property type="molecule type" value="mRNA"/>
</dbReference>
<dbReference type="EMBL" id="M65290">
    <property type="protein sequence ID" value="AAA59938.1"/>
    <property type="molecule type" value="mRNA"/>
</dbReference>
<dbReference type="EMBL" id="AY008847">
    <property type="protein sequence ID" value="AAG32620.1"/>
    <property type="molecule type" value="Genomic_DNA"/>
</dbReference>
<dbReference type="EMBL" id="AF180563">
    <property type="protein sequence ID" value="AAD56386.1"/>
    <property type="molecule type" value="mRNA"/>
</dbReference>
<dbReference type="EMBL" id="AF512686">
    <property type="protein sequence ID" value="AAM34792.1"/>
    <property type="molecule type" value="Genomic_DNA"/>
</dbReference>
<dbReference type="EMBL" id="BC067498">
    <property type="protein sequence ID" value="AAH67498.1"/>
    <property type="molecule type" value="mRNA"/>
</dbReference>
<dbReference type="EMBL" id="BC067499">
    <property type="protein sequence ID" value="AAH67499.1"/>
    <property type="molecule type" value="mRNA"/>
</dbReference>
<dbReference type="EMBL" id="BC067500">
    <property type="protein sequence ID" value="AAH67500.1"/>
    <property type="molecule type" value="mRNA"/>
</dbReference>
<dbReference type="EMBL" id="BC067501">
    <property type="protein sequence ID" value="AAH67501.1"/>
    <property type="molecule type" value="mRNA"/>
</dbReference>
<dbReference type="EMBL" id="BC067502">
    <property type="protein sequence ID" value="AAH67502.1"/>
    <property type="molecule type" value="mRNA"/>
</dbReference>
<dbReference type="EMBL" id="BC074723">
    <property type="protein sequence ID" value="AAH74723.1"/>
    <property type="molecule type" value="mRNA"/>
</dbReference>
<dbReference type="CCDS" id="CCDS4346.1"/>
<dbReference type="PIR" id="A38957">
    <property type="entry name" value="A38957"/>
</dbReference>
<dbReference type="RefSeq" id="NP_002178.2">
    <property type="nucleotide sequence ID" value="NM_002187.2"/>
</dbReference>
<dbReference type="PDB" id="1F42">
    <property type="method" value="X-ray"/>
    <property type="resolution" value="2.50 A"/>
    <property type="chains" value="A=23-328"/>
</dbReference>
<dbReference type="PDB" id="1F45">
    <property type="method" value="X-ray"/>
    <property type="resolution" value="2.80 A"/>
    <property type="chains" value="A=23-328"/>
</dbReference>
<dbReference type="PDB" id="3D85">
    <property type="method" value="X-ray"/>
    <property type="resolution" value="1.90 A"/>
    <property type="chains" value="D=23-328"/>
</dbReference>
<dbReference type="PDB" id="3D87">
    <property type="method" value="X-ray"/>
    <property type="resolution" value="2.90 A"/>
    <property type="chains" value="B/D=23-328"/>
</dbReference>
<dbReference type="PDB" id="3DUH">
    <property type="method" value="X-ray"/>
    <property type="resolution" value="2.30 A"/>
    <property type="chains" value="A/B=23-328"/>
</dbReference>
<dbReference type="PDB" id="3HMX">
    <property type="method" value="X-ray"/>
    <property type="resolution" value="3.00 A"/>
    <property type="chains" value="A=23-328"/>
</dbReference>
<dbReference type="PDB" id="3QWR">
    <property type="method" value="X-ray"/>
    <property type="resolution" value="3.25 A"/>
    <property type="chains" value="A=23-328"/>
</dbReference>
<dbReference type="PDB" id="4GRW">
    <property type="method" value="X-ray"/>
    <property type="resolution" value="2.55 A"/>
    <property type="chains" value="B/D=1-328"/>
</dbReference>
<dbReference type="PDB" id="5MJ3">
    <property type="method" value="X-ray"/>
    <property type="resolution" value="1.74 A"/>
    <property type="chains" value="A=23-328"/>
</dbReference>
<dbReference type="PDB" id="5MJ4">
    <property type="method" value="X-ray"/>
    <property type="resolution" value="3.40 A"/>
    <property type="chains" value="A=23-328"/>
</dbReference>
<dbReference type="PDB" id="5MXA">
    <property type="method" value="X-ray"/>
    <property type="resolution" value="2.50 A"/>
    <property type="chains" value="A=1-328"/>
</dbReference>
<dbReference type="PDB" id="5MZV">
    <property type="method" value="X-ray"/>
    <property type="resolution" value="2.80 A"/>
    <property type="chains" value="A=1-328"/>
</dbReference>
<dbReference type="PDB" id="5NJD">
    <property type="method" value="X-ray"/>
    <property type="resolution" value="3.90 A"/>
    <property type="chains" value="A/C/E/G/I/K=1-328"/>
</dbReference>
<dbReference type="PDB" id="6UIB">
    <property type="method" value="X-ray"/>
    <property type="resolution" value="2.74 A"/>
    <property type="chains" value="B=23-328"/>
</dbReference>
<dbReference type="PDB" id="6WDQ">
    <property type="method" value="X-ray"/>
    <property type="resolution" value="3.40 A"/>
    <property type="chains" value="A=21-328"/>
</dbReference>
<dbReference type="PDB" id="8CR8">
    <property type="method" value="X-ray"/>
    <property type="resolution" value="2.00 A"/>
    <property type="chains" value="A=23-328"/>
</dbReference>
<dbReference type="PDB" id="8OE4">
    <property type="method" value="EM"/>
    <property type="resolution" value="3.60 A"/>
    <property type="chains" value="A=23-328"/>
</dbReference>
<dbReference type="PDB" id="8XRP">
    <property type="method" value="EM"/>
    <property type="resolution" value="3.75 A"/>
    <property type="chains" value="B/F/J/N=22-328"/>
</dbReference>
<dbReference type="PDB" id="8YI7">
    <property type="method" value="EM"/>
    <property type="resolution" value="3.57 A"/>
    <property type="chains" value="B=22-328"/>
</dbReference>
<dbReference type="PDBsum" id="1F42"/>
<dbReference type="PDBsum" id="1F45"/>
<dbReference type="PDBsum" id="3D85"/>
<dbReference type="PDBsum" id="3D87"/>
<dbReference type="PDBsum" id="3DUH"/>
<dbReference type="PDBsum" id="3HMX"/>
<dbReference type="PDBsum" id="3QWR"/>
<dbReference type="PDBsum" id="4GRW"/>
<dbReference type="PDBsum" id="5MJ3"/>
<dbReference type="PDBsum" id="5MJ4"/>
<dbReference type="PDBsum" id="5MXA"/>
<dbReference type="PDBsum" id="5MZV"/>
<dbReference type="PDBsum" id="5NJD"/>
<dbReference type="PDBsum" id="6UIB"/>
<dbReference type="PDBsum" id="6WDQ"/>
<dbReference type="PDBsum" id="8CR8"/>
<dbReference type="PDBsum" id="8OE4"/>
<dbReference type="PDBsum" id="8XRP"/>
<dbReference type="PDBsum" id="8YI7"/>
<dbReference type="EMDB" id="EMD-16824"/>
<dbReference type="EMDB" id="EMD-38609"/>
<dbReference type="EMDB" id="EMD-39311"/>
<dbReference type="SMR" id="P29460"/>
<dbReference type="BioGRID" id="109807">
    <property type="interactions" value="3"/>
</dbReference>
<dbReference type="ComplexPortal" id="CPX-3290">
    <property type="entry name" value="Interleukin-23 complex"/>
</dbReference>
<dbReference type="ComplexPortal" id="CPX-381">
    <property type="entry name" value="Interleukin-12 complex"/>
</dbReference>
<dbReference type="ComplexPortal" id="CPX-383">
    <property type="entry name" value="Interleukin-23 receptor-ligand complex"/>
</dbReference>
<dbReference type="CORUM" id="P29460"/>
<dbReference type="DIP" id="DIP-3774N"/>
<dbReference type="ELM" id="P29460"/>
<dbReference type="FunCoup" id="P29460">
    <property type="interactions" value="548"/>
</dbReference>
<dbReference type="IntAct" id="P29460">
    <property type="interactions" value="4"/>
</dbReference>
<dbReference type="STRING" id="9606.ENSP00000231228"/>
<dbReference type="ChEMBL" id="CHEMBL3580484"/>
<dbReference type="DrugBank" id="DB02763">
    <property type="generic name" value="5-Mercapto-2-Nitro-Benzoic Acid"/>
</dbReference>
<dbReference type="DrugBank" id="DB05459">
    <property type="generic name" value="Briakinumab"/>
</dbReference>
<dbReference type="DrugBank" id="DB05848">
    <property type="generic name" value="humanized SMART Anti-IL-12 Antibody"/>
</dbReference>
<dbReference type="DrugBank" id="DB01064">
    <property type="generic name" value="Isoprenaline"/>
</dbReference>
<dbReference type="DrugBank" id="DB14762">
    <property type="generic name" value="Risankizumab"/>
</dbReference>
<dbReference type="DrugBank" id="DB14004">
    <property type="generic name" value="Tildrakizumab"/>
</dbReference>
<dbReference type="DrugBank" id="DB05679">
    <property type="generic name" value="Ustekinumab"/>
</dbReference>
<dbReference type="DrugCentral" id="P29460"/>
<dbReference type="GlyCosmos" id="P29460">
    <property type="glycosylation" value="3 sites, 1 glycan"/>
</dbReference>
<dbReference type="GlyGen" id="P29460">
    <property type="glycosylation" value="3 sites"/>
</dbReference>
<dbReference type="iPTMnet" id="P29460"/>
<dbReference type="PhosphoSitePlus" id="P29460"/>
<dbReference type="BioMuta" id="IL12B"/>
<dbReference type="DMDM" id="266320"/>
<dbReference type="jPOST" id="P29460"/>
<dbReference type="MassIVE" id="P29460"/>
<dbReference type="PaxDb" id="9606-ENSP00000231228"/>
<dbReference type="PeptideAtlas" id="P29460"/>
<dbReference type="ProteomicsDB" id="54570"/>
<dbReference type="ABCD" id="P29460">
    <property type="antibodies" value="23 sequenced antibodies"/>
</dbReference>
<dbReference type="Antibodypedia" id="16629">
    <property type="antibodies" value="1064 antibodies from 49 providers"/>
</dbReference>
<dbReference type="DNASU" id="3593"/>
<dbReference type="Ensembl" id="ENST00000231228.3">
    <property type="protein sequence ID" value="ENSP00000231228.2"/>
    <property type="gene ID" value="ENSG00000113302.6"/>
</dbReference>
<dbReference type="GeneID" id="3593"/>
<dbReference type="KEGG" id="hsa:3593"/>
<dbReference type="MANE-Select" id="ENST00000231228.3">
    <property type="protein sequence ID" value="ENSP00000231228.2"/>
    <property type="RefSeq nucleotide sequence ID" value="NM_002187.3"/>
    <property type="RefSeq protein sequence ID" value="NP_002178.2"/>
</dbReference>
<dbReference type="UCSC" id="uc003lxr.2">
    <property type="organism name" value="human"/>
</dbReference>
<dbReference type="AGR" id="HGNC:5970"/>
<dbReference type="CTD" id="3593"/>
<dbReference type="DisGeNET" id="3593"/>
<dbReference type="GeneCards" id="IL12B"/>
<dbReference type="HGNC" id="HGNC:5970">
    <property type="gene designation" value="IL12B"/>
</dbReference>
<dbReference type="HPA" id="ENSG00000113302">
    <property type="expression patterns" value="Tissue enhanced (lymphoid)"/>
</dbReference>
<dbReference type="MalaCards" id="IL12B"/>
<dbReference type="MIM" id="161561">
    <property type="type" value="gene"/>
</dbReference>
<dbReference type="MIM" id="612599">
    <property type="type" value="phenotype"/>
</dbReference>
<dbReference type="MIM" id="614890">
    <property type="type" value="phenotype"/>
</dbReference>
<dbReference type="neXtProt" id="NX_P29460"/>
<dbReference type="OpenTargets" id="ENSG00000113302"/>
<dbReference type="Orphanet" id="319558">
    <property type="disease" value="Mendelian susceptibility to mycobacterial diseases due to complete IL12B deficiency"/>
</dbReference>
<dbReference type="Orphanet" id="3287">
    <property type="disease" value="Takayasu arteritis"/>
</dbReference>
<dbReference type="PharmGKB" id="PA29785"/>
<dbReference type="VEuPathDB" id="HostDB:ENSG00000113302"/>
<dbReference type="eggNOG" id="ENOG502RZMA">
    <property type="taxonomic scope" value="Eukaryota"/>
</dbReference>
<dbReference type="GeneTree" id="ENSGT00390000012630"/>
<dbReference type="HOGENOM" id="CLU_071206_1_0_1"/>
<dbReference type="InParanoid" id="P29460"/>
<dbReference type="OMA" id="EANNYSG"/>
<dbReference type="OrthoDB" id="8670716at2759"/>
<dbReference type="PAN-GO" id="P29460">
    <property type="GO annotations" value="7 GO annotations based on evolutionary models"/>
</dbReference>
<dbReference type="PhylomeDB" id="P29460"/>
<dbReference type="TreeFam" id="TF334829"/>
<dbReference type="PathwayCommons" id="P29460"/>
<dbReference type="Reactome" id="R-HSA-6783783">
    <property type="pathway name" value="Interleukin-10 signaling"/>
</dbReference>
<dbReference type="Reactome" id="R-HSA-6785807">
    <property type="pathway name" value="Interleukin-4 and Interleukin-13 signaling"/>
</dbReference>
<dbReference type="Reactome" id="R-HSA-9020591">
    <property type="pathway name" value="Interleukin-12 signaling"/>
</dbReference>
<dbReference type="Reactome" id="R-HSA-9020933">
    <property type="pathway name" value="Interleukin-23 signaling"/>
</dbReference>
<dbReference type="SignaLink" id="P29460"/>
<dbReference type="SIGNOR" id="P29460"/>
<dbReference type="BioGRID-ORCS" id="3593">
    <property type="hits" value="16 hits in 1155 CRISPR screens"/>
</dbReference>
<dbReference type="EvolutionaryTrace" id="P29460"/>
<dbReference type="GeneWiki" id="Interleukin-12_subunit_beta"/>
<dbReference type="GenomeRNAi" id="3593"/>
<dbReference type="Pharos" id="P29460">
    <property type="development level" value="Tclin"/>
</dbReference>
<dbReference type="PRO" id="PR:P29460"/>
<dbReference type="Proteomes" id="UP000005640">
    <property type="component" value="Chromosome 5"/>
</dbReference>
<dbReference type="RNAct" id="P29460">
    <property type="molecule type" value="protein"/>
</dbReference>
<dbReference type="Bgee" id="ENSG00000113302">
    <property type="expression patterns" value="Expressed in primordial germ cell in gonad and 29 other cell types or tissues"/>
</dbReference>
<dbReference type="GO" id="GO:0009986">
    <property type="term" value="C:cell surface"/>
    <property type="evidence" value="ECO:0007669"/>
    <property type="project" value="Ensembl"/>
</dbReference>
<dbReference type="GO" id="GO:0005829">
    <property type="term" value="C:cytosol"/>
    <property type="evidence" value="ECO:0000304"/>
    <property type="project" value="Reactome"/>
</dbReference>
<dbReference type="GO" id="GO:0005788">
    <property type="term" value="C:endoplasmic reticulum lumen"/>
    <property type="evidence" value="ECO:0000304"/>
    <property type="project" value="Reactome"/>
</dbReference>
<dbReference type="GO" id="GO:0005576">
    <property type="term" value="C:extracellular region"/>
    <property type="evidence" value="ECO:0000304"/>
    <property type="project" value="Reactome"/>
</dbReference>
<dbReference type="GO" id="GO:0005615">
    <property type="term" value="C:extracellular space"/>
    <property type="evidence" value="ECO:0000314"/>
    <property type="project" value="UniProt"/>
</dbReference>
<dbReference type="GO" id="GO:0043514">
    <property type="term" value="C:interleukin-12 complex"/>
    <property type="evidence" value="ECO:0000314"/>
    <property type="project" value="UniProtKB"/>
</dbReference>
<dbReference type="GO" id="GO:0070743">
    <property type="term" value="C:interleukin-23 complex"/>
    <property type="evidence" value="ECO:0000314"/>
    <property type="project" value="BHF-UCL"/>
</dbReference>
<dbReference type="GO" id="GO:0031906">
    <property type="term" value="C:late endosome lumen"/>
    <property type="evidence" value="ECO:0000304"/>
    <property type="project" value="Reactome"/>
</dbReference>
<dbReference type="GO" id="GO:0016020">
    <property type="term" value="C:membrane"/>
    <property type="evidence" value="ECO:0007669"/>
    <property type="project" value="InterPro"/>
</dbReference>
<dbReference type="GO" id="GO:0005125">
    <property type="term" value="F:cytokine activity"/>
    <property type="evidence" value="ECO:0000314"/>
    <property type="project" value="UniProt"/>
</dbReference>
<dbReference type="GO" id="GO:0004896">
    <property type="term" value="F:cytokine receptor activity"/>
    <property type="evidence" value="ECO:0007669"/>
    <property type="project" value="InterPro"/>
</dbReference>
<dbReference type="GO" id="GO:0042802">
    <property type="term" value="F:identical protein binding"/>
    <property type="evidence" value="ECO:0000353"/>
    <property type="project" value="IntAct"/>
</dbReference>
<dbReference type="GO" id="GO:0042164">
    <property type="term" value="F:interleukin-12 alpha subunit binding"/>
    <property type="evidence" value="ECO:0000353"/>
    <property type="project" value="AgBase"/>
</dbReference>
<dbReference type="GO" id="GO:0005143">
    <property type="term" value="F:interleukin-12 receptor binding"/>
    <property type="evidence" value="ECO:0000318"/>
    <property type="project" value="GO_Central"/>
</dbReference>
<dbReference type="GO" id="GO:0046982">
    <property type="term" value="F:protein heterodimerization activity"/>
    <property type="evidence" value="ECO:0000353"/>
    <property type="project" value="UniProtKB"/>
</dbReference>
<dbReference type="GO" id="GO:0044877">
    <property type="term" value="F:protein-containing complex binding"/>
    <property type="evidence" value="ECO:0007669"/>
    <property type="project" value="Ensembl"/>
</dbReference>
<dbReference type="GO" id="GO:0016477">
    <property type="term" value="P:cell migration"/>
    <property type="evidence" value="ECO:0000314"/>
    <property type="project" value="UniProtKB"/>
</dbReference>
<dbReference type="GO" id="GO:0007259">
    <property type="term" value="P:cell surface receptor signaling pathway via JAK-STAT"/>
    <property type="evidence" value="ECO:0000314"/>
    <property type="project" value="BHF-UCL"/>
</dbReference>
<dbReference type="GO" id="GO:0071222">
    <property type="term" value="P:cellular response to lipopolysaccharide"/>
    <property type="evidence" value="ECO:0007669"/>
    <property type="project" value="Ensembl"/>
</dbReference>
<dbReference type="GO" id="GO:0071346">
    <property type="term" value="P:cellular response to type II interferon"/>
    <property type="evidence" value="ECO:0007669"/>
    <property type="project" value="Ensembl"/>
</dbReference>
<dbReference type="GO" id="GO:0050829">
    <property type="term" value="P:defense response to Gram-negative bacterium"/>
    <property type="evidence" value="ECO:0000314"/>
    <property type="project" value="BHF-UCL"/>
</dbReference>
<dbReference type="GO" id="GO:0042832">
    <property type="term" value="P:defense response to protozoan"/>
    <property type="evidence" value="ECO:0007669"/>
    <property type="project" value="Ensembl"/>
</dbReference>
<dbReference type="GO" id="GO:0051607">
    <property type="term" value="P:defense response to virus"/>
    <property type="evidence" value="ECO:0007669"/>
    <property type="project" value="Ensembl"/>
</dbReference>
<dbReference type="GO" id="GO:0035722">
    <property type="term" value="P:interleukin-12-mediated signaling pathway"/>
    <property type="evidence" value="ECO:0000314"/>
    <property type="project" value="UniProt"/>
</dbReference>
<dbReference type="GO" id="GO:0030101">
    <property type="term" value="P:natural killer cell activation"/>
    <property type="evidence" value="ECO:0000314"/>
    <property type="project" value="UniProtKB"/>
</dbReference>
<dbReference type="GO" id="GO:0002323">
    <property type="term" value="P:natural killer cell activation involved in immune response"/>
    <property type="evidence" value="ECO:0007669"/>
    <property type="project" value="Ensembl"/>
</dbReference>
<dbReference type="GO" id="GO:1903588">
    <property type="term" value="P:negative regulation of blood vessel endothelial cell proliferation involved in sprouting angiogenesis"/>
    <property type="evidence" value="ECO:0000316"/>
    <property type="project" value="ARUK-UCL"/>
</dbReference>
<dbReference type="GO" id="GO:0002862">
    <property type="term" value="P:negative regulation of inflammatory response to antigenic stimulus"/>
    <property type="evidence" value="ECO:0007669"/>
    <property type="project" value="Ensembl"/>
</dbReference>
<dbReference type="GO" id="GO:0032693">
    <property type="term" value="P:negative regulation of interleukin-10 production"/>
    <property type="evidence" value="ECO:0000315"/>
    <property type="project" value="BHF-UCL"/>
</dbReference>
<dbReference type="GO" id="GO:0032700">
    <property type="term" value="P:negative regulation of interleukin-17 production"/>
    <property type="evidence" value="ECO:0000314"/>
    <property type="project" value="BHF-UCL"/>
</dbReference>
<dbReference type="GO" id="GO:0050709">
    <property type="term" value="P:negative regulation of protein secretion"/>
    <property type="evidence" value="ECO:0000316"/>
    <property type="project" value="ARUK-UCL"/>
</dbReference>
<dbReference type="GO" id="GO:0048662">
    <property type="term" value="P:negative regulation of smooth muscle cell proliferation"/>
    <property type="evidence" value="ECO:0000314"/>
    <property type="project" value="BHF-UCL"/>
</dbReference>
<dbReference type="GO" id="GO:1900747">
    <property type="term" value="P:negative regulation of vascular endothelial growth factor signaling pathway"/>
    <property type="evidence" value="ECO:0000316"/>
    <property type="project" value="ARUK-UCL"/>
</dbReference>
<dbReference type="GO" id="GO:0042104">
    <property type="term" value="P:positive regulation of activated T cell proliferation"/>
    <property type="evidence" value="ECO:0000314"/>
    <property type="project" value="UniProtKB"/>
</dbReference>
<dbReference type="GO" id="GO:0045785">
    <property type="term" value="P:positive regulation of cell adhesion"/>
    <property type="evidence" value="ECO:0000314"/>
    <property type="project" value="UniProtKB"/>
</dbReference>
<dbReference type="GO" id="GO:0002230">
    <property type="term" value="P:positive regulation of defense response to virus by host"/>
    <property type="evidence" value="ECO:0000314"/>
    <property type="project" value="BHF-UCL"/>
</dbReference>
<dbReference type="GO" id="GO:0032725">
    <property type="term" value="P:positive regulation of granulocyte macrophage colony-stimulating factor production"/>
    <property type="evidence" value="ECO:0000314"/>
    <property type="project" value="BHF-UCL"/>
</dbReference>
<dbReference type="GO" id="GO:0050729">
    <property type="term" value="P:positive regulation of inflammatory response"/>
    <property type="evidence" value="ECO:0000305"/>
    <property type="project" value="BHF-UCL"/>
</dbReference>
<dbReference type="GO" id="GO:0032733">
    <property type="term" value="P:positive regulation of interleukin-10 production"/>
    <property type="evidence" value="ECO:0000314"/>
    <property type="project" value="BHF-UCL"/>
</dbReference>
<dbReference type="GO" id="GO:0032735">
    <property type="term" value="P:positive regulation of interleukin-12 production"/>
    <property type="evidence" value="ECO:0000314"/>
    <property type="project" value="BHF-UCL"/>
</dbReference>
<dbReference type="GO" id="GO:0032740">
    <property type="term" value="P:positive regulation of interleukin-17 production"/>
    <property type="evidence" value="ECO:0000314"/>
    <property type="project" value="BHF-UCL"/>
</dbReference>
<dbReference type="GO" id="GO:0050671">
    <property type="term" value="P:positive regulation of lymphocyte proliferation"/>
    <property type="evidence" value="ECO:0000314"/>
    <property type="project" value="UniProtKB"/>
</dbReference>
<dbReference type="GO" id="GO:0043382">
    <property type="term" value="P:positive regulation of memory T cell differentiation"/>
    <property type="evidence" value="ECO:0000250"/>
    <property type="project" value="BHF-UCL"/>
</dbReference>
<dbReference type="GO" id="GO:0032946">
    <property type="term" value="P:positive regulation of mononuclear cell proliferation"/>
    <property type="evidence" value="ECO:0000315"/>
    <property type="project" value="AgBase"/>
</dbReference>
<dbReference type="GO" id="GO:0032816">
    <property type="term" value="P:positive regulation of natural killer cell activation"/>
    <property type="evidence" value="ECO:0000314"/>
    <property type="project" value="UniProtKB"/>
</dbReference>
<dbReference type="GO" id="GO:0002860">
    <property type="term" value="P:positive regulation of natural killer cell mediated cytotoxicity directed against tumor cell target"/>
    <property type="evidence" value="ECO:0000314"/>
    <property type="project" value="UniProtKB"/>
</dbReference>
<dbReference type="GO" id="GO:0032819">
    <property type="term" value="P:positive regulation of natural killer cell proliferation"/>
    <property type="evidence" value="ECO:0000314"/>
    <property type="project" value="BHF-UCL"/>
</dbReference>
<dbReference type="GO" id="GO:0051135">
    <property type="term" value="P:positive regulation of NK T cell activation"/>
    <property type="evidence" value="ECO:0000314"/>
    <property type="project" value="BHF-UCL"/>
</dbReference>
<dbReference type="GO" id="GO:0051142">
    <property type="term" value="P:positive regulation of NK T cell proliferation"/>
    <property type="evidence" value="ECO:0000314"/>
    <property type="project" value="BHF-UCL"/>
</dbReference>
<dbReference type="GO" id="GO:1901224">
    <property type="term" value="P:positive regulation of non-canonical NF-kappaB signal transduction"/>
    <property type="evidence" value="ECO:0000304"/>
    <property type="project" value="BHF-UCL"/>
</dbReference>
<dbReference type="GO" id="GO:0045672">
    <property type="term" value="P:positive regulation of osteoclast differentiation"/>
    <property type="evidence" value="ECO:0000314"/>
    <property type="project" value="BHF-UCL"/>
</dbReference>
<dbReference type="GO" id="GO:0034393">
    <property type="term" value="P:positive regulation of smooth muscle cell apoptotic process"/>
    <property type="evidence" value="ECO:0000314"/>
    <property type="project" value="BHF-UCL"/>
</dbReference>
<dbReference type="GO" id="GO:0001916">
    <property type="term" value="P:positive regulation of T cell mediated cytotoxicity"/>
    <property type="evidence" value="ECO:0000250"/>
    <property type="project" value="BHF-UCL"/>
</dbReference>
<dbReference type="GO" id="GO:0042102">
    <property type="term" value="P:positive regulation of T cell proliferation"/>
    <property type="evidence" value="ECO:0000314"/>
    <property type="project" value="BHF-UCL"/>
</dbReference>
<dbReference type="GO" id="GO:0002827">
    <property type="term" value="P:positive regulation of T-helper 1 type immune response"/>
    <property type="evidence" value="ECO:0000314"/>
    <property type="project" value="BHF-UCL"/>
</dbReference>
<dbReference type="GO" id="GO:2000330">
    <property type="term" value="P:positive regulation of T-helper 17 cell lineage commitment"/>
    <property type="evidence" value="ECO:0000250"/>
    <property type="project" value="BHF-UCL"/>
</dbReference>
<dbReference type="GO" id="GO:2000318">
    <property type="term" value="P:positive regulation of T-helper 17 type immune response"/>
    <property type="evidence" value="ECO:0000250"/>
    <property type="project" value="BHF-UCL"/>
</dbReference>
<dbReference type="GO" id="GO:0034105">
    <property type="term" value="P:positive regulation of tissue remodeling"/>
    <property type="evidence" value="ECO:0000305"/>
    <property type="project" value="BHF-UCL"/>
</dbReference>
<dbReference type="GO" id="GO:0032760">
    <property type="term" value="P:positive regulation of tumor necrosis factor production"/>
    <property type="evidence" value="ECO:0000315"/>
    <property type="project" value="BHF-UCL"/>
</dbReference>
<dbReference type="GO" id="GO:0032729">
    <property type="term" value="P:positive regulation of type II interferon production"/>
    <property type="evidence" value="ECO:0000314"/>
    <property type="project" value="UniProtKB"/>
</dbReference>
<dbReference type="GO" id="GO:0001817">
    <property type="term" value="P:regulation of cytokine production"/>
    <property type="evidence" value="ECO:0000304"/>
    <property type="project" value="UniProtKB"/>
</dbReference>
<dbReference type="GO" id="GO:0010224">
    <property type="term" value="P:response to UV-B"/>
    <property type="evidence" value="ECO:0000314"/>
    <property type="project" value="UniProtKB"/>
</dbReference>
<dbReference type="GO" id="GO:0019953">
    <property type="term" value="P:sexual reproduction"/>
    <property type="evidence" value="ECO:0000304"/>
    <property type="project" value="BHF-UCL"/>
</dbReference>
<dbReference type="GO" id="GO:0042098">
    <property type="term" value="P:T cell proliferation"/>
    <property type="evidence" value="ECO:0007669"/>
    <property type="project" value="Ensembl"/>
</dbReference>
<dbReference type="GO" id="GO:0042088">
    <property type="term" value="P:T-helper 1 type immune response"/>
    <property type="evidence" value="ECO:0000304"/>
    <property type="project" value="UniProtKB"/>
</dbReference>
<dbReference type="GO" id="GO:0042093">
    <property type="term" value="P:T-helper cell differentiation"/>
    <property type="evidence" value="ECO:0000314"/>
    <property type="project" value="UniProtKB"/>
</dbReference>
<dbReference type="CDD" id="cd00063">
    <property type="entry name" value="FN3"/>
    <property type="match status" value="1"/>
</dbReference>
<dbReference type="FunFam" id="2.60.40.10:FF:000959">
    <property type="entry name" value="Interleukin-12 subunit beta"/>
    <property type="match status" value="1"/>
</dbReference>
<dbReference type="FunFam" id="2.60.40.10:FF:001008">
    <property type="entry name" value="Interleukin-12 subunit beta"/>
    <property type="match status" value="1"/>
</dbReference>
<dbReference type="FunFam" id="2.60.40.10:FF:001009">
    <property type="entry name" value="Interleukin-12 subunit beta"/>
    <property type="match status" value="1"/>
</dbReference>
<dbReference type="Gene3D" id="2.60.40.10">
    <property type="entry name" value="Immunoglobulins"/>
    <property type="match status" value="3"/>
</dbReference>
<dbReference type="InterPro" id="IPR003961">
    <property type="entry name" value="FN3_dom"/>
</dbReference>
<dbReference type="InterPro" id="IPR036116">
    <property type="entry name" value="FN3_sf"/>
</dbReference>
<dbReference type="InterPro" id="IPR003530">
    <property type="entry name" value="Hematopoietin_rcpt_L_F3_CS"/>
</dbReference>
<dbReference type="InterPro" id="IPR007110">
    <property type="entry name" value="Ig-like_dom"/>
</dbReference>
<dbReference type="InterPro" id="IPR036179">
    <property type="entry name" value="Ig-like_dom_sf"/>
</dbReference>
<dbReference type="InterPro" id="IPR013783">
    <property type="entry name" value="Ig-like_fold"/>
</dbReference>
<dbReference type="InterPro" id="IPR003598">
    <property type="entry name" value="Ig_sub2"/>
</dbReference>
<dbReference type="InterPro" id="IPR050676">
    <property type="entry name" value="IL-12"/>
</dbReference>
<dbReference type="InterPro" id="IPR015528">
    <property type="entry name" value="IL-12_beta"/>
</dbReference>
<dbReference type="InterPro" id="IPR019482">
    <property type="entry name" value="IL-12_beta_cen-dom"/>
</dbReference>
<dbReference type="PANTHER" id="PTHR48485:SF4">
    <property type="entry name" value="INTERLEUKIN-12 SUBUNIT BETA"/>
    <property type="match status" value="1"/>
</dbReference>
<dbReference type="PANTHER" id="PTHR48485">
    <property type="entry name" value="INTERLEUKIN-12 SUBUNIT BETA-RELATED"/>
    <property type="match status" value="1"/>
</dbReference>
<dbReference type="Pfam" id="PF10420">
    <property type="entry name" value="IL12p40_C"/>
    <property type="match status" value="1"/>
</dbReference>
<dbReference type="PIRSF" id="PIRSF038007">
    <property type="entry name" value="IL_12_beta"/>
    <property type="match status" value="1"/>
</dbReference>
<dbReference type="PRINTS" id="PR01928">
    <property type="entry name" value="INTRLEUKN12B"/>
</dbReference>
<dbReference type="SMART" id="SM00408">
    <property type="entry name" value="IGc2"/>
    <property type="match status" value="1"/>
</dbReference>
<dbReference type="SUPFAM" id="SSF49265">
    <property type="entry name" value="Fibronectin type III"/>
    <property type="match status" value="2"/>
</dbReference>
<dbReference type="SUPFAM" id="SSF48726">
    <property type="entry name" value="Immunoglobulin"/>
    <property type="match status" value="1"/>
</dbReference>
<dbReference type="PROSITE" id="PS50853">
    <property type="entry name" value="FN3"/>
    <property type="match status" value="1"/>
</dbReference>
<dbReference type="PROSITE" id="PS01354">
    <property type="entry name" value="HEMATOPO_REC_L_F3"/>
    <property type="match status" value="1"/>
</dbReference>
<dbReference type="PROSITE" id="PS50835">
    <property type="entry name" value="IG_LIKE"/>
    <property type="match status" value="1"/>
</dbReference>
<name>IL12B_HUMAN</name>
<evidence type="ECO:0000250" key="1">
    <source>
        <dbReference type="UniProtKB" id="P43432"/>
    </source>
</evidence>
<evidence type="ECO:0000255" key="2"/>
<evidence type="ECO:0000255" key="3">
    <source>
        <dbReference type="PROSITE-ProRule" id="PRU00114"/>
    </source>
</evidence>
<evidence type="ECO:0000255" key="4">
    <source>
        <dbReference type="PROSITE-ProRule" id="PRU00316"/>
    </source>
</evidence>
<evidence type="ECO:0000269" key="5">
    <source>
    </source>
</evidence>
<evidence type="ECO:0000269" key="6">
    <source>
    </source>
</evidence>
<evidence type="ECO:0000269" key="7">
    <source>
    </source>
</evidence>
<evidence type="ECO:0000269" key="8">
    <source>
    </source>
</evidence>
<evidence type="ECO:0000269" key="9">
    <source>
    </source>
</evidence>
<evidence type="ECO:0000269" key="10">
    <source>
    </source>
</evidence>
<evidence type="ECO:0000269" key="11">
    <source>
    </source>
</evidence>
<evidence type="ECO:0000269" key="12">
    <source>
    </source>
</evidence>
<evidence type="ECO:0000269" key="13">
    <source>
    </source>
</evidence>
<evidence type="ECO:0000269" key="14">
    <source>
    </source>
</evidence>
<evidence type="ECO:0000269" key="15">
    <source ref="5"/>
</evidence>
<evidence type="ECO:0000305" key="16"/>
<evidence type="ECO:0007829" key="17">
    <source>
        <dbReference type="PDB" id="3D85"/>
    </source>
</evidence>
<evidence type="ECO:0007829" key="18">
    <source>
        <dbReference type="PDB" id="3D87"/>
    </source>
</evidence>
<evidence type="ECO:0007829" key="19">
    <source>
        <dbReference type="PDB" id="3HMX"/>
    </source>
</evidence>
<evidence type="ECO:0007829" key="20">
    <source>
        <dbReference type="PDB" id="5MJ3"/>
    </source>
</evidence>
<evidence type="ECO:0007829" key="21">
    <source>
        <dbReference type="PDB" id="5MJ4"/>
    </source>
</evidence>
<protein>
    <recommendedName>
        <fullName>Interleukin-12 subunit beta</fullName>
        <shortName>IL-12B</shortName>
    </recommendedName>
    <alternativeName>
        <fullName>Cytotoxic lymphocyte maturation factor 40 kDa subunit</fullName>
        <shortName>CLMF p40</shortName>
    </alternativeName>
    <alternativeName>
        <fullName>IL-12 subunit p40</fullName>
    </alternativeName>
    <alternativeName>
        <fullName>NK cell stimulatory factor chain 2</fullName>
        <shortName>NKSF2</shortName>
    </alternativeName>
</protein>
<comment type="function">
    <text evidence="7">Cytokine that can act as a growth factor for activated T and NK cells, enhance the lytic activity of NK/lymphokine-activated killer cells, and stimulate the production of IFN-gamma by resting PBMC.</text>
</comment>
<comment type="function">
    <text evidence="7">Associates with IL23A to form the IL-23 interleukin, a heterodimeric cytokine which functions in innate and adaptive immunity. IL-23 may constitute with IL-17 an acute response to infection in peripheral tissues. IL-23 binds to a heterodimeric receptor complex composed of IL12RB1 and IL23R, activates the Jak-Stat signaling cascade, stimulates memory rather than naive T-cells and promotes production of pro-inflammatory cytokines. IL-23 induces autoimmune inflammation and thus may be responsible for autoimmune inflammatory diseases and may be important for tumorigenesis.</text>
</comment>
<comment type="subunit">
    <text evidence="1 6 9 10 13">Heterodimer with IL12A; disulfide-linked. The heterodimer is known as interleukin IL-12. Heterodimer with IL23A; disulfide-linked. The heterodimer is known as interleukin IL-23. Also secreted as a monomer. Interacts with NBR1; this interaction promotes IL-12 secretion (By similarity).</text>
</comment>
<comment type="interaction">
    <interactant intactId="EBI-1029614">
        <id>P29460</id>
    </interactant>
    <interactant intactId="EBI-1029636">
        <id>P29459</id>
        <label>IL12A</label>
    </interactant>
    <organismsDiffer>false</organismsDiffer>
    <experiments>2</experiments>
</comment>
<comment type="interaction">
    <interactant intactId="EBI-1029614">
        <id>P29460</id>
    </interactant>
    <interactant intactId="EBI-1029614">
        <id>P29460</id>
        <label>IL12B</label>
    </interactant>
    <organismsDiffer>false</organismsDiffer>
    <experiments>2</experiments>
</comment>
<comment type="interaction">
    <interactant intactId="EBI-1029614">
        <id>P29460</id>
    </interactant>
    <interactant intactId="EBI-2481154">
        <id>Q9NPF7</id>
        <label>IL23A</label>
    </interactant>
    <organismsDiffer>false</organismsDiffer>
    <experiments>6</experiments>
</comment>
<comment type="interaction">
    <interactant intactId="EBI-1029614">
        <id>P29460</id>
    </interactant>
    <interactant intactId="EBI-2481329">
        <id>Q9EQ14</id>
        <label>Il23a</label>
    </interactant>
    <organismsDiffer>true</organismsDiffer>
    <experiments>2</experiments>
</comment>
<comment type="subcellular location">
    <subcellularLocation>
        <location>Secreted</location>
    </subcellularLocation>
</comment>
<comment type="PTM">
    <text>Known to be C-mannosylated in the recombinant protein; it is not yet known for sure if the wild-type protein is also modified.</text>
</comment>
<comment type="disease" evidence="8 14">
    <disease id="DI-04222">
        <name>Immunodeficiency 29</name>
        <acronym>IMD29</acronym>
        <description>A form of Mendelian susceptibility to mycobacterial disease, a rare condition caused by impairment of interferon-gamma mediated immunity. It is characterized by predisposition to illness caused by moderately virulent mycobacterial species, such as Bacillus Calmette-Guerin (BCG) vaccine, environmental non-tuberculous mycobacteria, and by the more virulent Mycobacterium tuberculosis. Other microorganisms rarely cause severe clinical disease in individuals with susceptibility to mycobacterial infections, with the exception of Salmonella which infects less than 50% of these individuals. Clinical outcome severity depends on the degree of impairment of interferon-gamma mediated immunity. Some patients die of overwhelming mycobacterial disease with lepromatous-like lesions in early childhood, whereas others develop, later in life, disseminated but curable infections with tuberculoid granulomas. IMD29 is characterized by undetectable IL12B secretion from leukocytes. Affected individuals generally present with BCG disease after vaccination in childhood, and at least half also have Salmonella infection. Disease phenotype is relatively mild, and patients have a good prognosis.</description>
        <dbReference type="MIM" id="614890"/>
    </disease>
    <text>The disease is caused by variants affecting the gene represented in this entry.</text>
</comment>
<comment type="disease">
    <disease id="DI-02669">
        <name>Psoriasis 11</name>
        <acronym>PSORS11</acronym>
        <description>A common, chronic inflammatory disease of the skin with multifactorial etiology. It is characterized by red, scaly plaques usually found on the scalp, elbows and knees. These lesions are caused by abnormal keratinocyte proliferation and infiltration of inflammatory cells into the dermis and epidermis.</description>
        <dbReference type="MIM" id="612599"/>
    </disease>
    <text>Disease susceptibility is associated with variants affecting the gene represented in this entry.</text>
</comment>
<comment type="similarity">
    <text evidence="16">Belongs to the IL-12B family.</text>
</comment>
<comment type="online information" name="IL12Bbase">
    <link uri="https://databases.lovd.nl/shared/genes/IL12B"/>
    <text>IL12B mutation db</text>
</comment>
<reference key="1">
    <citation type="journal article" date="1991" name="Proc. Natl. Acad. Sci. U.S.A.">
        <title>Coexpression of two distinct genes is required to generate secreted bioactive cytotoxic lymphocyte maturation factor.</title>
        <authorList>
            <person name="Gubler U."/>
            <person name="Chua A.O."/>
            <person name="Schoenhaut D.S."/>
            <person name="Dwyer C.M."/>
            <person name="McComas W."/>
            <person name="Motyka R."/>
            <person name="Nabavi N."/>
            <person name="Wolitzky A.G."/>
            <person name="Quinn P.M."/>
            <person name="Familletti P.C."/>
            <person name="Gately M.K."/>
        </authorList>
    </citation>
    <scope>NUCLEOTIDE SEQUENCE [MRNA]</scope>
</reference>
<reference key="2">
    <citation type="journal article" date="1991" name="J. Immunol.">
        <title>Cloning of cDNA for natural killer cell stimulatory factor, a heterodimeric cytokine with multiple biologic effects on T and natural killer cells.</title>
        <authorList>
            <person name="Wolf S.F."/>
            <person name="Temple P.A."/>
            <person name="Kobayashi M."/>
            <person name="Young D."/>
            <person name="Dicig M."/>
            <person name="Lowe L."/>
            <person name="Dzialo R."/>
            <person name="Fitz L."/>
            <person name="Ferenz C."/>
            <person name="Hewick R.M."/>
            <person name="Kelleher K."/>
            <person name="Herrmann S.H."/>
            <person name="Clark S.C."/>
            <person name="Azzoni L."/>
            <person name="Chan S.H."/>
            <person name="Trinchieri G."/>
            <person name="Perussia B."/>
        </authorList>
    </citation>
    <scope>NUCLEOTIDE SEQUENCE [MRNA]</scope>
</reference>
<reference key="3">
    <citation type="journal article" date="2000" name="Genes Immun.">
        <title>Complete primary structure, chromosomal localization, and definition of polymorphisms of the gene encoding the human interleukin 12 p40 subunit.</title>
        <authorList>
            <person name="Huang D."/>
            <person name="Cancilla M.R."/>
            <person name="Morahan G."/>
        </authorList>
    </citation>
    <scope>NUCLEOTIDE SEQUENCE [GENOMIC DNA]</scope>
</reference>
<reference key="4">
    <citation type="submission" date="1999-08" db="EMBL/GenBank/DDBJ databases">
        <title>Cloning and sequence analysis of IL-12 cDNA from Chinese.</title>
        <authorList>
            <person name="Hongyuan J."/>
            <person name="Meiyun Z."/>
        </authorList>
    </citation>
    <scope>NUCLEOTIDE SEQUENCE [MRNA]</scope>
</reference>
<reference key="5">
    <citation type="submission" date="2002-05" db="EMBL/GenBank/DDBJ databases">
        <authorList>
            <consortium name="SeattleSNPs variation discovery resource"/>
        </authorList>
    </citation>
    <scope>NUCLEOTIDE SEQUENCE [GENOMIC DNA]</scope>
    <scope>VARIANTS ILE-33 AND PHE-298</scope>
</reference>
<reference key="6">
    <citation type="journal article" date="2004" name="Genome Res.">
        <title>The status, quality, and expansion of the NIH full-length cDNA project: the Mammalian Gene Collection (MGC).</title>
        <authorList>
            <consortium name="The MGC Project Team"/>
        </authorList>
    </citation>
    <scope>NUCLEOTIDE SEQUENCE [LARGE SCALE MRNA]</scope>
    <source>
        <tissue>Brain</tissue>
    </source>
</reference>
<reference key="7">
    <citation type="journal article" date="1990" name="Proc. Natl. Acad. Sci. U.S.A.">
        <title>Purification to homogeneity and partial characterization of cytotoxic lymphocyte maturation factor from human B-lymphoblastoid cells.</title>
        <authorList>
            <person name="Stern A.S."/>
            <person name="Podlaski F.J."/>
            <person name="Hulmes J.D."/>
            <person name="Pan Y.C.E."/>
            <person name="Quinn P.M."/>
            <person name="Wolitzky A.G."/>
            <person name="Familletti P.C."/>
            <person name="Stremlo D.L."/>
            <person name="Truitt T."/>
            <person name="Chizzonite R."/>
            <person name="Gately M.K."/>
        </authorList>
    </citation>
    <scope>PROTEIN SEQUENCE OF 23-45</scope>
</reference>
<reference key="8">
    <citation type="journal article" date="1991" name="Cell">
        <title>Homology of the p40 subunit of natural killer cell stimulatory factor (NKSF) with the extracellular domain of the interleukin-6 receptor.</title>
        <authorList>
            <person name="Gearing D.P."/>
            <person name="Cosman D."/>
        </authorList>
    </citation>
    <scope>SIMILARITY TO IL-6 RECEPTOR</scope>
</reference>
<reference key="9">
    <citation type="journal article" date="1995" name="J. Exp. Med.">
        <title>Stimulatory and inhibitory effects of interleukin (IL)-4 and IL-13 on the production of cytokines by human peripheral blood mononuclear cells: priming for IL-12 and tumor necrosis factor alpha production.</title>
        <authorList>
            <person name="D'Andrea A."/>
            <person name="Ma X."/>
            <person name="Aste-Amezaga M."/>
            <person name="Paganin C."/>
            <person name="Trinchieri G."/>
        </authorList>
    </citation>
    <scope>SUBUNIT</scope>
</reference>
<reference key="10">
    <citation type="journal article" date="1999" name="Glycobiology">
        <title>Recombinant human interleukin-12 is the second example of a C-mannosylated protein.</title>
        <authorList>
            <person name="Doucey M.A."/>
            <person name="Hess D."/>
            <person name="Blommers M.J."/>
            <person name="Hofsteenge J."/>
        </authorList>
    </citation>
    <scope>GLYCOSYLATION AT TRP-319</scope>
</reference>
<reference key="11">
    <citation type="journal article" date="1998" name="J. Clin. Invest.">
        <title>Inherited interleukin 12 deficiency in a child with bacille Calmette-Guerin and Salmonella enteritidis disseminated infection.</title>
        <authorList>
            <person name="Altare F."/>
            <person name="Lammas D."/>
            <person name="Revy P."/>
            <person name="Jouanguy E."/>
            <person name="Doeffinger R."/>
            <person name="Lamhamedi-Cherradi S.-E."/>
            <person name="Drysdale P."/>
            <person name="Scheel-Toellner D."/>
            <person name="Girdlestone J."/>
            <person name="Darbyshire P."/>
            <person name="Wadhwa M."/>
            <person name="Dockrell H."/>
            <person name="Salmon M."/>
            <person name="Fischer A."/>
            <person name="Durandy A."/>
            <person name="Casanova J.-L."/>
            <person name="Kumararatne D.S."/>
        </authorList>
    </citation>
    <scope>INVOLVEMENT IN IMD29</scope>
</reference>
<reference key="12">
    <citation type="journal article" date="2000" name="Immunity">
        <title>Novel p19 protein engages IL-12p40 to form a cytokine, IL-23, with biological activities similar as well as distinct from IL-12.</title>
        <authorList>
            <person name="Oppmann B."/>
            <person name="Lesley R."/>
            <person name="Blom B."/>
            <person name="Timans J.C."/>
            <person name="Xu Y."/>
            <person name="Hunte B."/>
            <person name="Vega F."/>
            <person name="Yu N."/>
            <person name="Wang J."/>
            <person name="Singh K.P."/>
            <person name="Zonin F."/>
            <person name="Vaisberg E."/>
            <person name="Churakova T."/>
            <person name="Liu M.-R."/>
            <person name="Gorman D."/>
            <person name="Wagner J."/>
            <person name="Zurawski S."/>
            <person name="Liu Y.-J."/>
            <person name="Abrams J.S."/>
            <person name="Moore K.W."/>
            <person name="Rennick D.M."/>
            <person name="de Waal-Malefyt R."/>
            <person name="Hannum C."/>
            <person name="Bazan J.F."/>
            <person name="Kastelein R.A."/>
        </authorList>
    </citation>
    <scope>FUNCTION</scope>
    <scope>INTERACTION WITH IL23A</scope>
</reference>
<reference key="13">
    <citation type="journal article" date="2002" name="Am. J. Hum. Genet.">
        <title>Inherited interleukin-12 deficiency: IL12B genotype and clinical phenotype of 13 patients from six kindreds.</title>
        <authorList>
            <person name="Picard C."/>
            <person name="Fieschi C."/>
            <person name="Altare F."/>
            <person name="Al-Jumaah S."/>
            <person name="Al-Hajjar S."/>
            <person name="Feinberg J."/>
            <person name="Dupuis S."/>
            <person name="Soudais C."/>
            <person name="Al-Mohsen I.Z."/>
            <person name="Genin E."/>
            <person name="Lammas D."/>
            <person name="Kumararatne D.S."/>
            <person name="Leclerc T."/>
            <person name="Rafii A."/>
            <person name="Frayha H."/>
            <person name="Murugasu B."/>
            <person name="Wah L.B."/>
            <person name="Sinniah R."/>
            <person name="Loubser M."/>
            <person name="Okamoto E."/>
            <person name="Al-Ghonaium A."/>
            <person name="Tufenkeji H."/>
            <person name="Abel L."/>
            <person name="Casanova J.-L."/>
        </authorList>
    </citation>
    <scope>INVOLVEMENT IN IMD29</scope>
</reference>
<reference key="14">
    <citation type="journal article" date="2007" name="Hum. Genet.">
        <title>Sequence variants in the genes for the interleukin-23 receptor (IL23R) and its ligand (IL12B) confer protection against psoriasis.</title>
        <authorList>
            <person name="Capon F."/>
            <person name="Di Meglio P."/>
            <person name="Szaub J."/>
            <person name="Prescott N.J."/>
            <person name="Dunster C."/>
            <person name="Baumber L."/>
            <person name="Timms K."/>
            <person name="Gutin A."/>
            <person name="Abkevic V."/>
            <person name="Burden A.D."/>
            <person name="Lanchbury J."/>
            <person name="Barker J.N."/>
            <person name="Trembath R.C."/>
            <person name="Nestle F.O."/>
        </authorList>
    </citation>
    <scope>ASSOCIATION WITH PSORIASIS</scope>
</reference>
<reference key="15">
    <citation type="journal article" date="2009" name="J. Invest. Dermatol.">
        <title>Genetic variants of the IL-23R pathway: association with psoriatic arthritis and psoriasis vulgaris, but no specific risk factor for arthritis.</title>
        <authorList>
            <person name="Huffmeier U."/>
            <person name="Lascorz J."/>
            <person name="Bohm B."/>
            <person name="Lohmann J."/>
            <person name="Wendler J."/>
            <person name="Mossner R."/>
            <person name="Reich K."/>
            <person name="Traupe H."/>
            <person name="Kurrat W."/>
            <person name="Burkhardt H."/>
            <person name="Reis A."/>
        </authorList>
    </citation>
    <scope>ASSOCIATION WITH PSORIASIS</scope>
</reference>
<reference key="16">
    <citation type="journal article" date="2000" name="EMBO J.">
        <title>Charged residues dominate a unique interlocking topography in the heterodimeric cytokine interleukin-12.</title>
        <authorList>
            <person name="Yoon C."/>
            <person name="Johnston S.C."/>
            <person name="Tang J."/>
            <person name="Stahl M."/>
            <person name="Tobin J.F."/>
            <person name="Somers W.S."/>
        </authorList>
    </citation>
    <scope>X-RAY CRYSTALLOGRAPHY (2.5 ANGSTROMS) OF 23-328 ALONE AND IN COMPLEX WITH IL12A</scope>
    <scope>GLYCOSYLATION AT ASN-222</scope>
    <scope>DISULFIDE BONDS</scope>
</reference>
<reference key="17">
    <citation type="journal article" date="2008" name="J. Mol. Biol.">
        <title>Crystal structures of the pro-inflammatory cytokine interleukin-23 and its complex with a high-affinity neutralizing antibody.</title>
        <authorList>
            <person name="Beyer B.M."/>
            <person name="Ingram R."/>
            <person name="Ramanathan L."/>
            <person name="Reichert P."/>
            <person name="Le H.V."/>
            <person name="Madison V."/>
            <person name="Orth P."/>
        </authorList>
    </citation>
    <scope>X-RAY CRYSTALLOGRAPHY (1.9 ANGSTROMS) OF 23-328 IN COMPLEX WITH IL23A AND ANTIBODY</scope>
</reference>
<reference key="18">
    <citation type="journal article" date="2008" name="J. Mol. Biol.">
        <title>The structure of interleukin-23 reveals the molecular basis of p40 subunit sharing with interleukin-12.</title>
        <authorList>
            <person name="Lupardus P.J."/>
            <person name="Garcia K.C."/>
        </authorList>
    </citation>
    <scope>X-RAY CRYSTALLOGRAPHY (2.3 ANGSTROMS) OF 23-328 IN COMPLEX WITH IL23A</scope>
    <scope>SUBUNIT</scope>
</reference>
<accession>P29460</accession>
<keyword id="KW-0002">3D-structure</keyword>
<keyword id="KW-0202">Cytokine</keyword>
<keyword id="KW-0903">Direct protein sequencing</keyword>
<keyword id="KW-1015">Disulfide bond</keyword>
<keyword id="KW-0325">Glycoprotein</keyword>
<keyword id="KW-0393">Immunoglobulin domain</keyword>
<keyword id="KW-1267">Proteomics identification</keyword>
<keyword id="KW-1185">Reference proteome</keyword>
<keyword id="KW-0964">Secreted</keyword>
<keyword id="KW-0732">Signal</keyword>
<organism>
    <name type="scientific">Homo sapiens</name>
    <name type="common">Human</name>
    <dbReference type="NCBI Taxonomy" id="9606"/>
    <lineage>
        <taxon>Eukaryota</taxon>
        <taxon>Metazoa</taxon>
        <taxon>Chordata</taxon>
        <taxon>Craniata</taxon>
        <taxon>Vertebrata</taxon>
        <taxon>Euteleostomi</taxon>
        <taxon>Mammalia</taxon>
        <taxon>Eutheria</taxon>
        <taxon>Euarchontoglires</taxon>
        <taxon>Primates</taxon>
        <taxon>Haplorrhini</taxon>
        <taxon>Catarrhini</taxon>
        <taxon>Hominidae</taxon>
        <taxon>Homo</taxon>
    </lineage>
</organism>
<sequence>MCHQQLVISWFSLVFLASPLVAIWELKKDVYVVELDWYPDAPGEMVVLTCDTPEEDGITWTLDQSSEVLGSGKTLTIQVKEFGDAGQYTCHKGGEVLSHSLLLLHKKEDGIWSTDILKDQKEPKNKTFLRCEAKNYSGRFTCWWLTTISTDLTFSVKSSRGSSDPQGVTCGAATLSAERVRGDNKEYEYSVECQEDSACPAAEESLPIEVMVDAVHKLKYENYTSSFFIRDIIKPDPPKNLQLKPLKNSRQVEVSWEYPDTWSTPHSYFSLTFCVQVQGKSKREKKDRVFTDKTSATVICRKNASISVRAQDRYYSSSWSEWASVPCS</sequence>
<proteinExistence type="evidence at protein level"/>